<gene>
    <name type="primary">paa-3</name>
    <name type="synonym">cft1</name>
    <name type="ORF">NCU02082</name>
</gene>
<proteinExistence type="inferred from homology"/>
<accession>Q7SEY2</accession>
<feature type="chain" id="PRO_0000290633" description="Protein cft1">
    <location>
        <begin position="1"/>
        <end position="1487"/>
    </location>
</feature>
<feature type="region of interest" description="Disordered" evidence="2">
    <location>
        <begin position="486"/>
        <end position="513"/>
    </location>
</feature>
<feature type="compositionally biased region" description="Acidic residues" evidence="2">
    <location>
        <begin position="486"/>
        <end position="504"/>
    </location>
</feature>
<name>CFT1_NEUCR</name>
<evidence type="ECO:0000250" key="1"/>
<evidence type="ECO:0000256" key="2">
    <source>
        <dbReference type="SAM" id="MobiDB-lite"/>
    </source>
</evidence>
<evidence type="ECO:0000305" key="3"/>
<reference key="1">
    <citation type="journal article" date="2003" name="Nature">
        <title>The genome sequence of the filamentous fungus Neurospora crassa.</title>
        <authorList>
            <person name="Galagan J.E."/>
            <person name="Calvo S.E."/>
            <person name="Borkovich K.A."/>
            <person name="Selker E.U."/>
            <person name="Read N.D."/>
            <person name="Jaffe D.B."/>
            <person name="FitzHugh W."/>
            <person name="Ma L.-J."/>
            <person name="Smirnov S."/>
            <person name="Purcell S."/>
            <person name="Rehman B."/>
            <person name="Elkins T."/>
            <person name="Engels R."/>
            <person name="Wang S."/>
            <person name="Nielsen C.B."/>
            <person name="Butler J."/>
            <person name="Endrizzi M."/>
            <person name="Qui D."/>
            <person name="Ianakiev P."/>
            <person name="Bell-Pedersen D."/>
            <person name="Nelson M.A."/>
            <person name="Werner-Washburne M."/>
            <person name="Selitrennikoff C.P."/>
            <person name="Kinsey J.A."/>
            <person name="Braun E.L."/>
            <person name="Zelter A."/>
            <person name="Schulte U."/>
            <person name="Kothe G.O."/>
            <person name="Jedd G."/>
            <person name="Mewes H.-W."/>
            <person name="Staben C."/>
            <person name="Marcotte E."/>
            <person name="Greenberg D."/>
            <person name="Roy A."/>
            <person name="Foley K."/>
            <person name="Naylor J."/>
            <person name="Stange-Thomann N."/>
            <person name="Barrett R."/>
            <person name="Gnerre S."/>
            <person name="Kamal M."/>
            <person name="Kamvysselis M."/>
            <person name="Mauceli E.W."/>
            <person name="Bielke C."/>
            <person name="Rudd S."/>
            <person name="Frishman D."/>
            <person name="Krystofova S."/>
            <person name="Rasmussen C."/>
            <person name="Metzenberg R.L."/>
            <person name="Perkins D.D."/>
            <person name="Kroken S."/>
            <person name="Cogoni C."/>
            <person name="Macino G."/>
            <person name="Catcheside D.E.A."/>
            <person name="Li W."/>
            <person name="Pratt R.J."/>
            <person name="Osmani S.A."/>
            <person name="DeSouza C.P.C."/>
            <person name="Glass N.L."/>
            <person name="Orbach M.J."/>
            <person name="Berglund J.A."/>
            <person name="Voelker R."/>
            <person name="Yarden O."/>
            <person name="Plamann M."/>
            <person name="Seiler S."/>
            <person name="Dunlap J.C."/>
            <person name="Radford A."/>
            <person name="Aramayo R."/>
            <person name="Natvig D.O."/>
            <person name="Alex L.A."/>
            <person name="Mannhaupt G."/>
            <person name="Ebbole D.J."/>
            <person name="Freitag M."/>
            <person name="Paulsen I."/>
            <person name="Sachs M.S."/>
            <person name="Lander E.S."/>
            <person name="Nusbaum C."/>
            <person name="Birren B.W."/>
        </authorList>
    </citation>
    <scope>NUCLEOTIDE SEQUENCE [LARGE SCALE GENOMIC DNA]</scope>
    <source>
        <strain>ATCC 24698 / 74-OR23-1A / CBS 708.71 / DSM 1257 / FGSC 987</strain>
    </source>
</reference>
<keyword id="KW-0507">mRNA processing</keyword>
<keyword id="KW-0539">Nucleus</keyword>
<keyword id="KW-1185">Reference proteome</keyword>
<keyword id="KW-0694">RNA-binding</keyword>
<dbReference type="EMBL" id="CM002236">
    <property type="protein sequence ID" value="EAA35373.3"/>
    <property type="molecule type" value="Genomic_DNA"/>
</dbReference>
<dbReference type="RefSeq" id="XP_964609.3">
    <property type="nucleotide sequence ID" value="XM_959516.3"/>
</dbReference>
<dbReference type="SMR" id="Q7SEY2"/>
<dbReference type="FunCoup" id="Q7SEY2">
    <property type="interactions" value="1085"/>
</dbReference>
<dbReference type="STRING" id="367110.Q7SEY2"/>
<dbReference type="PaxDb" id="5141-EFNCRP00000001333"/>
<dbReference type="EnsemblFungi" id="EAA35373">
    <property type="protein sequence ID" value="EAA35373"/>
    <property type="gene ID" value="NCU02082"/>
</dbReference>
<dbReference type="GeneID" id="3880749"/>
<dbReference type="KEGG" id="ncr:NCU02082"/>
<dbReference type="VEuPathDB" id="FungiDB:NCU02082"/>
<dbReference type="HOGENOM" id="CLU_002414_2_1_1"/>
<dbReference type="InParanoid" id="Q7SEY2"/>
<dbReference type="OrthoDB" id="6109at2759"/>
<dbReference type="Proteomes" id="UP000001805">
    <property type="component" value="Chromosome 1, Linkage Group I"/>
</dbReference>
<dbReference type="GO" id="GO:0005847">
    <property type="term" value="C:mRNA cleavage and polyadenylation specificity factor complex"/>
    <property type="evidence" value="ECO:0000318"/>
    <property type="project" value="GO_Central"/>
</dbReference>
<dbReference type="GO" id="GO:0005634">
    <property type="term" value="C:nucleus"/>
    <property type="evidence" value="ECO:0000318"/>
    <property type="project" value="GO_Central"/>
</dbReference>
<dbReference type="GO" id="GO:0003723">
    <property type="term" value="F:RNA binding"/>
    <property type="evidence" value="ECO:0007669"/>
    <property type="project" value="UniProtKB-KW"/>
</dbReference>
<dbReference type="GO" id="GO:0006397">
    <property type="term" value="P:mRNA processing"/>
    <property type="evidence" value="ECO:0007669"/>
    <property type="project" value="UniProtKB-KW"/>
</dbReference>
<dbReference type="FunFam" id="2.130.10.10:FF:000788">
    <property type="entry name" value="mRNA cleavage and polyadenylation factor subunit"/>
    <property type="match status" value="1"/>
</dbReference>
<dbReference type="Gene3D" id="2.130.10.10">
    <property type="entry name" value="YVTN repeat-like/Quinoprotein amine dehydrogenase"/>
    <property type="match status" value="2"/>
</dbReference>
<dbReference type="InterPro" id="IPR018846">
    <property type="entry name" value="Beta-prop_RSE1/DDB1/CPSF1_1st"/>
</dbReference>
<dbReference type="InterPro" id="IPR004871">
    <property type="entry name" value="Cleavage/polyA-sp_fac_asu_C"/>
</dbReference>
<dbReference type="InterPro" id="IPR050358">
    <property type="entry name" value="RSE1/DDB1/CFT1/CPSF1"/>
</dbReference>
<dbReference type="InterPro" id="IPR015943">
    <property type="entry name" value="WD40/YVTN_repeat-like_dom_sf"/>
</dbReference>
<dbReference type="PANTHER" id="PTHR10644">
    <property type="entry name" value="DNA REPAIR/RNA PROCESSING CPSF FAMILY"/>
    <property type="match status" value="1"/>
</dbReference>
<dbReference type="Pfam" id="PF10433">
    <property type="entry name" value="Beta-prop_RSE1_1st"/>
    <property type="match status" value="1"/>
</dbReference>
<dbReference type="Pfam" id="PF03178">
    <property type="entry name" value="CPSF_A"/>
    <property type="match status" value="1"/>
</dbReference>
<protein>
    <recommendedName>
        <fullName>Protein cft1</fullName>
    </recommendedName>
    <alternativeName>
        <fullName>Cleavage factor two protein 1</fullName>
    </alternativeName>
    <alternativeName>
        <fullName>Polyadenylation factor 3</fullName>
    </alternativeName>
</protein>
<sequence length="1487" mass="160921">MQCYTELTPPTAVTHSVTLQLVPGQGTNLAVAKASLLQIFKTKVVSAEIDTYATLNGTNTSSKAAAAGRYDSRLVNDDDGFEASFLGGDNIAARADRANSAKLVLVAEVTLPGTMTGLARIKKPSGSSSGGADCLLLSFRDARLSLVEWNVERNTLETVSIHYYEKEELVGSPWVAPLHQYPTLLVADPASRCAALKFSERNLAILPFKQPDEDMDMDNWDEELDGPRPKKDLSGAVANGASTIEDTPYSPSFVLRLSKLEASLLHPVHLAFLHEYRDPTIGVLSSTKTASNSLGHKDHFTYMVFTLDLQQRASTTILAVNGLPQDLFRVVALPAPVGGALLVGANELIHIDQSGKSNGIAVNPLTKQTTSFSLVDQADLDLRLEGCAIDVLAAELGEFLLILNDGRLGLITFRIDGRTVSGLSIKMIAPEAGGSVIQSRVTSLSRMGRSTMFVGSEEGDSVLLGWTRRQGQTQKRKSRLQDADLDLDLDDEDLEDDDDDDLYGEESASPEQAMSAAKAIKSGDLNFRIHDRLLSIAPIQKMTYGQPVTLPDSEEERNSEGVRSDLQLVCAVGRGKASALAIMNLAIQPKIIGRFEFPEARGFWTVCAKKPIPKTLVGDKGPMNNDYDTSGQYHKFMIVAKVDLDGYETSDVYALTAAGFESLTGTEFEPAAGFTVEAGTMGKDSRILQVLKSEVRCYDGDLGLSQIVPMLDEETGAEPRVRTASIADPFLLLIRDDFSVFIAEMSPKLLELEEVEKEDQILTSTKWLAGCLYTDTSGVFADETVGKGTKDNILMFLLSTSGVLYIYRLPDLTKPVYVAEGLSYIPPGLSADYAARKGTAKESVAEILVADLGDTTHKSPYLILRHANDDLTLYQPYRLKATAGQPFSKSLFFQKVPNSTFAKAPEEKPADDDEPHNAQRFLPMRRCSNISGYSTVFLPGSSPSFILKTAKSSPRVLSLQGSGVQAMSSFHTEGCEHGFIYADTNGIARVTQIPTDSSYAELGLSVKKIPIGVDTQSVAYHPPTQAYVVGCNDVEPFELPKDDDYHKEWARENITFKPMVDRGVLKLLSGITWTVIDTVEMEPCETVLCVETLNLEVSESTNERKQLIAVGTALIKGEDLPTRGRVYVFDIADVIPEPGKPETSKKLKLVAKEDIPRGAVTALSEVGTQGLMLVAQGQKCMVRGLKEDGTLLPVAFMDMNCYVTSVKELPGTGLCLMADAFKGVWFTGYTEEPYKMMLFGKSSTRMEVLNADFLPDGKELYIVASDADGHIHILQFDPEHPKSLQGHLLLHRTTFNTGAHHPTSSLLLPAVYPNPSSLSSNSEENSPHILLLASPTGVLATLRPLQENAYRRLSSLAVQLTNGLPHPAGLNPKGYRLPSPSASASMQLPGVDAGIGRNIVDGKILERFLELGTGKRQEMAGRAGYVVGTGAHGVNPAGSGKMMGGGGGLSLGGLRLNGLHGQEGGMEWEEVRGELGVVLGWSGLGYF</sequence>
<organism>
    <name type="scientific">Neurospora crassa (strain ATCC 24698 / 74-OR23-1A / CBS 708.71 / DSM 1257 / FGSC 987)</name>
    <dbReference type="NCBI Taxonomy" id="367110"/>
    <lineage>
        <taxon>Eukaryota</taxon>
        <taxon>Fungi</taxon>
        <taxon>Dikarya</taxon>
        <taxon>Ascomycota</taxon>
        <taxon>Pezizomycotina</taxon>
        <taxon>Sordariomycetes</taxon>
        <taxon>Sordariomycetidae</taxon>
        <taxon>Sordariales</taxon>
        <taxon>Sordariaceae</taxon>
        <taxon>Neurospora</taxon>
    </lineage>
</organism>
<comment type="function">
    <text evidence="1">RNA-binding component of the cleavage and polyadenylation factor (CPF) complex, which plays a key role in polyadenylation-dependent pre-mRNA 3'-end formation and cooperates with cleavage factors including the CFIA complex and hrp1/CFIB. Involved in poly(A) site recognition. May be involved in coupling transcription termination and mRNA 3'-end formation (By similarity).</text>
</comment>
<comment type="subcellular location">
    <subcellularLocation>
        <location evidence="1">Nucleus</location>
    </subcellularLocation>
</comment>
<comment type="similarity">
    <text evidence="3">Belongs to the CFT1 family.</text>
</comment>